<comment type="function">
    <text evidence="1 2">Chitin-binding protein (PubMed:21675945). Has antifungal activity against C.krusei, C.albicans, C.tropicalis and C.parapsilosis (PubMed:28634471). Has antinociceptive and anti-inflammatory activity in mice (PubMed:21675945).</text>
</comment>
<comment type="PTM">
    <text evidence="1">N-glycosylated.</text>
</comment>
<comment type="mass spectrometry">
    <text>Chain A. The measured range is 1-?.</text>
</comment>
<comment type="mass spectrometry">
    <text>Chain B. The measured range is 20-?.</text>
</comment>
<keyword id="KW-0147">Chitin-binding</keyword>
<keyword id="KW-0903">Direct protein sequencing</keyword>
<keyword id="KW-0325">Glycoprotein</keyword>
<evidence type="ECO:0000269" key="1">
    <source>
    </source>
</evidence>
<evidence type="ECO:0000269" key="2">
    <source>
    </source>
</evidence>
<evidence type="ECO:0000269" key="3">
    <source ref="1"/>
</evidence>
<evidence type="ECO:0000303" key="4">
    <source>
    </source>
</evidence>
<evidence type="ECO:0000303" key="5">
    <source ref="1"/>
</evidence>
<evidence type="ECO:0000305" key="6"/>
<reference evidence="6" key="1">
    <citation type="submission" date="2017-01" db="UniProtKB">
        <title>Anti-inflammatory and anti-hypernociceptive effects of oral administration of Mo-CBP4, a chitin-binding protein from Moringa oleifera seeds.</title>
        <authorList>
            <person name="Pereira M.S."/>
            <person name="Oliveira J.T.A."/>
            <person name="Vasconcelos I.M."/>
        </authorList>
    </citation>
    <scope>PROTEIN SEQUENCE</scope>
    <scope>MASS SPECTROMETRY</scope>
    <source>
        <tissue evidence="5">Seed</tissue>
    </source>
</reference>
<reference evidence="6" key="2">
    <citation type="journal article" date="2011" name="Protein Pept. Lett.">
        <title>Purification of a chitin-binding protein from Moringa oleifera seeds with potential to relieve pain and inflammation.</title>
        <authorList>
            <person name="Pereira M.L."/>
            <person name="de Oliveira H.D."/>
            <person name="de Oliveira J.T.A."/>
            <person name="Gifoni J.M."/>
            <person name="de Oliviera Rocha R."/>
            <person name="de Oliveira Bezerra de Sousa D."/>
            <person name="Vasconcelos I.M."/>
        </authorList>
    </citation>
    <scope>FUNCTION</scope>
    <scope>GLYCOSYLATION</scope>
    <source>
        <tissue evidence="4">Seed</tissue>
    </source>
</reference>
<reference key="3">
    <citation type="journal article" date="2017" name="Front. Microbiol.">
        <title>A Chitin-binding Protein Purified from Moringa oleifera Seeds Presents Anticandidal Activity by Increasing Cell Membrane Permeability and Reactive Oxygen Species Production.</title>
        <authorList>
            <person name="Neto J.X.S."/>
            <person name="Pereira M.L."/>
            <person name="Oliveira J.T.A."/>
            <person name="Rocha-Bezerra L.C.B."/>
            <person name="Lopes T.D.P."/>
            <person name="Costa H.P.S."/>
            <person name="Sousa D.O.B."/>
            <person name="Rocha B.A.M."/>
            <person name="Grangeiro T.B."/>
            <person name="Freire J.E.C."/>
            <person name="Monteiro-Moreira A.C.O."/>
            <person name="Lobo M.D.P."/>
            <person name="Brilhante R.S.N."/>
            <person name="Vasconcelos I.M."/>
        </authorList>
    </citation>
    <scope>FUNCTION</scope>
</reference>
<sequence>QQQQCRQGQQTHQRQRVCQARRPAIQRCCQQLRNIQVQCR</sequence>
<organism evidence="5">
    <name type="scientific">Moringa oleifera</name>
    <name type="common">Horseradish tree</name>
    <name type="synonym">Moringa pterygosperma</name>
    <dbReference type="NCBI Taxonomy" id="3735"/>
    <lineage>
        <taxon>Eukaryota</taxon>
        <taxon>Viridiplantae</taxon>
        <taxon>Streptophyta</taxon>
        <taxon>Embryophyta</taxon>
        <taxon>Tracheophyta</taxon>
        <taxon>Spermatophyta</taxon>
        <taxon>Magnoliopsida</taxon>
        <taxon>eudicotyledons</taxon>
        <taxon>Gunneridae</taxon>
        <taxon>Pentapetalae</taxon>
        <taxon>rosids</taxon>
        <taxon>malvids</taxon>
        <taxon>Brassicales</taxon>
        <taxon>Moringaceae</taxon>
        <taxon>Moringa</taxon>
    </lineage>
</organism>
<feature type="chain" id="PRO_0000439207" description="Chitin-binding protein 4 chain A" evidence="3">
    <location>
        <begin position="1"/>
        <end position="19"/>
    </location>
</feature>
<feature type="chain" id="PRO_0000439208" description="Chitin-binding protein 4 chain B" evidence="3">
    <location>
        <begin position="20"/>
        <end position="40"/>
    </location>
</feature>
<feature type="non-consecutive residues" evidence="6">
    <location>
        <begin position="19"/>
        <end position="20"/>
    </location>
</feature>
<feature type="non-terminal residue" evidence="5">
    <location>
        <position position="40"/>
    </location>
</feature>
<protein>
    <recommendedName>
        <fullName evidence="5">Chitin-binding protein 4</fullName>
        <shortName evidence="4">Mo-CBP4</shortName>
    </recommendedName>
    <component>
        <recommendedName>
            <fullName evidence="5">Chitin-binding protein 4 chain A</fullName>
        </recommendedName>
    </component>
    <component>
        <recommendedName>
            <fullName evidence="5">Chitin-binding protein 4 chain B</fullName>
        </recommendedName>
    </component>
</protein>
<accession>C0HKC7</accession>
<proteinExistence type="evidence at protein level"/>
<name>CBP4_MOROL</name>
<dbReference type="GO" id="GO:0008061">
    <property type="term" value="F:chitin binding"/>
    <property type="evidence" value="ECO:0007669"/>
    <property type="project" value="UniProtKB-KW"/>
</dbReference>
<dbReference type="GO" id="GO:0050832">
    <property type="term" value="P:defense response to fungus"/>
    <property type="evidence" value="ECO:0000314"/>
    <property type="project" value="UniProtKB"/>
</dbReference>